<gene>
    <name evidence="1" type="primary">yabA</name>
    <name type="ordered locus">SPy_0405</name>
    <name type="ordered locus">M5005_Spy0334</name>
</gene>
<comment type="function">
    <text evidence="1">Involved in control of chromosome replication initiation. Inhibits the cooperative binding of DnaA to the oriC region, thus negatively regulating initiation of chromosome replication. Inhibits the ability of DnaA-ATP to form a helix on DNA; does not disassemble preformed DnaA-DNA helices. Decreases the residence time of DnaA on the chromosome at its binding sites (oriC, replication forks and promoter-binding sites). Tethers DnaA to the replication machinery via the DNA polymerase beta sliding clamp subunit (dnaN). Associates with oriC and other DnaA targets on the chromosome in a DnaA-dependent manner.</text>
</comment>
<comment type="cofactor">
    <cofactor evidence="1">
        <name>Zn(2+)</name>
        <dbReference type="ChEBI" id="CHEBI:29105"/>
    </cofactor>
    <text evidence="1">Binds 1 zinc ion per subunit.</text>
</comment>
<comment type="subunit">
    <text evidence="1">Homotetramer. Interacts with both DnaA and DnaN, acting as a bridge between these two proteins.</text>
</comment>
<comment type="subcellular location">
    <subcellularLocation>
        <location evidence="1">Cytoplasm</location>
        <location evidence="1">Nucleoid</location>
    </subcellularLocation>
    <text evidence="1">Localizes in tight foci, which correspond to the replisome at mid-cell throughout the cell cycle.</text>
</comment>
<comment type="similarity">
    <text evidence="1">Belongs to the YabA family.</text>
</comment>
<reference key="1">
    <citation type="journal article" date="2001" name="Proc. Natl. Acad. Sci. U.S.A.">
        <title>Complete genome sequence of an M1 strain of Streptococcus pyogenes.</title>
        <authorList>
            <person name="Ferretti J.J."/>
            <person name="McShan W.M."/>
            <person name="Ajdic D.J."/>
            <person name="Savic D.J."/>
            <person name="Savic G."/>
            <person name="Lyon K."/>
            <person name="Primeaux C."/>
            <person name="Sezate S."/>
            <person name="Suvorov A.N."/>
            <person name="Kenton S."/>
            <person name="Lai H.S."/>
            <person name="Lin S.P."/>
            <person name="Qian Y."/>
            <person name="Jia H.G."/>
            <person name="Najar F.Z."/>
            <person name="Ren Q."/>
            <person name="Zhu H."/>
            <person name="Song L."/>
            <person name="White J."/>
            <person name="Yuan X."/>
            <person name="Clifton S.W."/>
            <person name="Roe B.A."/>
            <person name="McLaughlin R.E."/>
        </authorList>
    </citation>
    <scope>NUCLEOTIDE SEQUENCE [LARGE SCALE GENOMIC DNA]</scope>
    <source>
        <strain>ATCC 700294 / SF370 / Serotype M1</strain>
    </source>
</reference>
<reference key="2">
    <citation type="journal article" date="2005" name="J. Infect. Dis.">
        <title>Evolutionary origin and emergence of a highly successful clone of serotype M1 group A Streptococcus involved multiple horizontal gene transfer events.</title>
        <authorList>
            <person name="Sumby P."/>
            <person name="Porcella S.F."/>
            <person name="Madrigal A.G."/>
            <person name="Barbian K.D."/>
            <person name="Virtaneva K."/>
            <person name="Ricklefs S.M."/>
            <person name="Sturdevant D.E."/>
            <person name="Graham M.R."/>
            <person name="Vuopio-Varkila J."/>
            <person name="Hoe N.P."/>
            <person name="Musser J.M."/>
        </authorList>
    </citation>
    <scope>NUCLEOTIDE SEQUENCE [LARGE SCALE GENOMIC DNA]</scope>
    <source>
        <strain>ATCC BAA-947 / MGAS5005 / Serotype M1</strain>
    </source>
</reference>
<accession>Q9A187</accession>
<accession>Q490L5</accession>
<dbReference type="EMBL" id="AE004092">
    <property type="protein sequence ID" value="AAK33437.1"/>
    <property type="molecule type" value="Genomic_DNA"/>
</dbReference>
<dbReference type="EMBL" id="CP000017">
    <property type="protein sequence ID" value="AAZ50953.1"/>
    <property type="molecule type" value="Genomic_DNA"/>
</dbReference>
<dbReference type="RefSeq" id="NP_268716.1">
    <property type="nucleotide sequence ID" value="NC_002737.2"/>
</dbReference>
<dbReference type="SMR" id="Q9A187"/>
<dbReference type="PaxDb" id="1314-HKU360_00371"/>
<dbReference type="DNASU" id="900665"/>
<dbReference type="KEGG" id="spy:SPy_0405"/>
<dbReference type="KEGG" id="spz:M5005_Spy0334"/>
<dbReference type="PATRIC" id="fig|160490.10.peg.346"/>
<dbReference type="HOGENOM" id="CLU_157169_0_0_9"/>
<dbReference type="OMA" id="TEGDCLF"/>
<dbReference type="Proteomes" id="UP000000750">
    <property type="component" value="Chromosome"/>
</dbReference>
<dbReference type="GO" id="GO:0009295">
    <property type="term" value="C:nucleoid"/>
    <property type="evidence" value="ECO:0007669"/>
    <property type="project" value="UniProtKB-SubCell"/>
</dbReference>
<dbReference type="GO" id="GO:0006260">
    <property type="term" value="P:DNA replication"/>
    <property type="evidence" value="ECO:0007669"/>
    <property type="project" value="UniProtKB-UniRule"/>
</dbReference>
<dbReference type="HAMAP" id="MF_01159">
    <property type="entry name" value="YabA"/>
    <property type="match status" value="1"/>
</dbReference>
<dbReference type="InterPro" id="IPR010377">
    <property type="entry name" value="YabA"/>
</dbReference>
<dbReference type="NCBIfam" id="NF009640">
    <property type="entry name" value="PRK13169.1-1"/>
    <property type="match status" value="1"/>
</dbReference>
<dbReference type="Pfam" id="PF06156">
    <property type="entry name" value="YabA"/>
    <property type="match status" value="1"/>
</dbReference>
<dbReference type="PIRSF" id="PIRSF021439">
    <property type="entry name" value="DUF972"/>
    <property type="match status" value="1"/>
</dbReference>
<protein>
    <recommendedName>
        <fullName evidence="1">Replication initiation control protein YabA</fullName>
    </recommendedName>
</protein>
<feature type="chain" id="PRO_0000211929" description="Replication initiation control protein YabA">
    <location>
        <begin position="1"/>
        <end position="107"/>
    </location>
</feature>
<feature type="binding site" evidence="1">
    <location>
        <position position="81"/>
    </location>
    <ligand>
        <name>Zn(2+)</name>
        <dbReference type="ChEBI" id="CHEBI:29105"/>
    </ligand>
</feature>
<feature type="binding site" evidence="1">
    <location>
        <position position="83"/>
    </location>
    <ligand>
        <name>Zn(2+)</name>
        <dbReference type="ChEBI" id="CHEBI:29105"/>
    </ligand>
</feature>
<feature type="binding site" evidence="1">
    <location>
        <position position="97"/>
    </location>
    <ligand>
        <name>Zn(2+)</name>
        <dbReference type="ChEBI" id="CHEBI:29105"/>
    </ligand>
</feature>
<feature type="binding site" evidence="1">
    <location>
        <position position="100"/>
    </location>
    <ligand>
        <name>Zn(2+)</name>
        <dbReference type="ChEBI" id="CHEBI:29105"/>
    </ligand>
</feature>
<organism>
    <name type="scientific">Streptococcus pyogenes serotype M1</name>
    <dbReference type="NCBI Taxonomy" id="301447"/>
    <lineage>
        <taxon>Bacteria</taxon>
        <taxon>Bacillati</taxon>
        <taxon>Bacillota</taxon>
        <taxon>Bacilli</taxon>
        <taxon>Lactobacillales</taxon>
        <taxon>Streptococcaceae</taxon>
        <taxon>Streptococcus</taxon>
    </lineage>
</organism>
<proteinExistence type="inferred from homology"/>
<evidence type="ECO:0000255" key="1">
    <source>
        <dbReference type="HAMAP-Rule" id="MF_01159"/>
    </source>
</evidence>
<name>YABA_STRP1</name>
<sequence length="107" mass="12797">MNKKELFDAFDGFSQNLMVTLAEIEAMKKQVQSLVEENTILRLENTKLRERLSHLEHETVAKNPSKQRKDHLEGIYDEGFHICNFFYGQRRENDEECMFCRELLDRK</sequence>
<keyword id="KW-0963">Cytoplasm</keyword>
<keyword id="KW-0235">DNA replication</keyword>
<keyword id="KW-0236">DNA replication inhibitor</keyword>
<keyword id="KW-0479">Metal-binding</keyword>
<keyword id="KW-1185">Reference proteome</keyword>
<keyword id="KW-0862">Zinc</keyword>